<organism>
    <name type="scientific">Aliivibrio fischeri (strain MJ11)</name>
    <name type="common">Vibrio fischeri</name>
    <dbReference type="NCBI Taxonomy" id="388396"/>
    <lineage>
        <taxon>Bacteria</taxon>
        <taxon>Pseudomonadati</taxon>
        <taxon>Pseudomonadota</taxon>
        <taxon>Gammaproteobacteria</taxon>
        <taxon>Vibrionales</taxon>
        <taxon>Vibrionaceae</taxon>
        <taxon>Aliivibrio</taxon>
    </lineage>
</organism>
<keyword id="KW-0227">DNA damage</keyword>
<keyword id="KW-0233">DNA recombination</keyword>
<keyword id="KW-0234">DNA repair</keyword>
<name>RECO_ALIFM</name>
<accession>B5FAG8</accession>
<protein>
    <recommendedName>
        <fullName evidence="1">DNA repair protein RecO</fullName>
    </recommendedName>
    <alternativeName>
        <fullName evidence="1">Recombination protein O</fullName>
    </alternativeName>
</protein>
<sequence length="238" mass="27035">MEEGLQRCFVLHRRPYSESSLILDVFSEEYGRLSIISKGARSKRSNLKGVLQAFTPLLMKWSGKGSMRTLRQAETISLGIPLTGINLYSAMYINELLVRVVEQETPYPALFLDYLTALTELAQSTNPEPALRRFELALLSAMGYGVDFLHCAGSGEMVSPEMTYRYREQQGFMASIRHDPLMSFKGNELIAISERRFTTPEQLKAAKRFTRIALKPYLGGKPLKSRELFLPRTRSILK</sequence>
<proteinExistence type="inferred from homology"/>
<feature type="chain" id="PRO_1000099426" description="DNA repair protein RecO">
    <location>
        <begin position="1"/>
        <end position="238"/>
    </location>
</feature>
<evidence type="ECO:0000255" key="1">
    <source>
        <dbReference type="HAMAP-Rule" id="MF_00201"/>
    </source>
</evidence>
<gene>
    <name evidence="1" type="primary">recO</name>
    <name type="ordered locus">VFMJ11_2190</name>
</gene>
<reference key="1">
    <citation type="submission" date="2008-08" db="EMBL/GenBank/DDBJ databases">
        <title>Complete sequence of Vibrio fischeri strain MJ11.</title>
        <authorList>
            <person name="Mandel M.J."/>
            <person name="Stabb E.V."/>
            <person name="Ruby E.G."/>
            <person name="Ferriera S."/>
            <person name="Johnson J."/>
            <person name="Kravitz S."/>
            <person name="Beeson K."/>
            <person name="Sutton G."/>
            <person name="Rogers Y.-H."/>
            <person name="Friedman R."/>
            <person name="Frazier M."/>
            <person name="Venter J.C."/>
        </authorList>
    </citation>
    <scope>NUCLEOTIDE SEQUENCE [LARGE SCALE GENOMIC DNA]</scope>
    <source>
        <strain>MJ11</strain>
    </source>
</reference>
<comment type="function">
    <text evidence="1">Involved in DNA repair and RecF pathway recombination.</text>
</comment>
<comment type="similarity">
    <text evidence="1">Belongs to the RecO family.</text>
</comment>
<dbReference type="EMBL" id="CP001139">
    <property type="protein sequence ID" value="ACH66920.1"/>
    <property type="molecule type" value="Genomic_DNA"/>
</dbReference>
<dbReference type="RefSeq" id="WP_005420710.1">
    <property type="nucleotide sequence ID" value="NC_011184.1"/>
</dbReference>
<dbReference type="SMR" id="B5FAG8"/>
<dbReference type="GeneID" id="54164790"/>
<dbReference type="KEGG" id="vfm:VFMJ11_2190"/>
<dbReference type="HOGENOM" id="CLU_066645_1_0_6"/>
<dbReference type="Proteomes" id="UP000001857">
    <property type="component" value="Chromosome I"/>
</dbReference>
<dbReference type="GO" id="GO:0043590">
    <property type="term" value="C:bacterial nucleoid"/>
    <property type="evidence" value="ECO:0007669"/>
    <property type="project" value="TreeGrafter"/>
</dbReference>
<dbReference type="GO" id="GO:0006310">
    <property type="term" value="P:DNA recombination"/>
    <property type="evidence" value="ECO:0007669"/>
    <property type="project" value="UniProtKB-UniRule"/>
</dbReference>
<dbReference type="GO" id="GO:0006302">
    <property type="term" value="P:double-strand break repair"/>
    <property type="evidence" value="ECO:0007669"/>
    <property type="project" value="TreeGrafter"/>
</dbReference>
<dbReference type="Gene3D" id="2.40.50.140">
    <property type="entry name" value="Nucleic acid-binding proteins"/>
    <property type="match status" value="1"/>
</dbReference>
<dbReference type="Gene3D" id="1.20.1440.120">
    <property type="entry name" value="Recombination protein O, C-terminal domain"/>
    <property type="match status" value="1"/>
</dbReference>
<dbReference type="HAMAP" id="MF_00201">
    <property type="entry name" value="RecO"/>
    <property type="match status" value="1"/>
</dbReference>
<dbReference type="InterPro" id="IPR037278">
    <property type="entry name" value="ARFGAP/RecO"/>
</dbReference>
<dbReference type="InterPro" id="IPR022572">
    <property type="entry name" value="DNA_rep/recomb_RecO_N"/>
</dbReference>
<dbReference type="InterPro" id="IPR012340">
    <property type="entry name" value="NA-bd_OB-fold"/>
</dbReference>
<dbReference type="InterPro" id="IPR003717">
    <property type="entry name" value="RecO"/>
</dbReference>
<dbReference type="InterPro" id="IPR042242">
    <property type="entry name" value="RecO_C"/>
</dbReference>
<dbReference type="NCBIfam" id="TIGR00613">
    <property type="entry name" value="reco"/>
    <property type="match status" value="1"/>
</dbReference>
<dbReference type="PANTHER" id="PTHR33991">
    <property type="entry name" value="DNA REPAIR PROTEIN RECO"/>
    <property type="match status" value="1"/>
</dbReference>
<dbReference type="PANTHER" id="PTHR33991:SF1">
    <property type="entry name" value="DNA REPAIR PROTEIN RECO"/>
    <property type="match status" value="1"/>
</dbReference>
<dbReference type="Pfam" id="PF02565">
    <property type="entry name" value="RecO_C"/>
    <property type="match status" value="1"/>
</dbReference>
<dbReference type="Pfam" id="PF11967">
    <property type="entry name" value="RecO_N"/>
    <property type="match status" value="1"/>
</dbReference>
<dbReference type="SUPFAM" id="SSF57863">
    <property type="entry name" value="ArfGap/RecO-like zinc finger"/>
    <property type="match status" value="1"/>
</dbReference>
<dbReference type="SUPFAM" id="SSF50249">
    <property type="entry name" value="Nucleic acid-binding proteins"/>
    <property type="match status" value="1"/>
</dbReference>